<keyword id="KW-0963">Cytoplasm</keyword>
<keyword id="KW-0251">Elongation factor</keyword>
<keyword id="KW-0648">Protein biosynthesis</keyword>
<keyword id="KW-1185">Reference proteome</keyword>
<dbReference type="EMBL" id="CP000009">
    <property type="protein sequence ID" value="AAW60019.1"/>
    <property type="molecule type" value="Genomic_DNA"/>
</dbReference>
<dbReference type="RefSeq" id="WP_011251822.1">
    <property type="nucleotide sequence ID" value="NZ_LT900338.1"/>
</dbReference>
<dbReference type="SMR" id="Q5FUC7"/>
<dbReference type="STRING" id="290633.GOX0236"/>
<dbReference type="GeneID" id="56904503"/>
<dbReference type="KEGG" id="gox:GOX0236"/>
<dbReference type="eggNOG" id="COG0231">
    <property type="taxonomic scope" value="Bacteria"/>
</dbReference>
<dbReference type="HOGENOM" id="CLU_074944_1_1_5"/>
<dbReference type="UniPathway" id="UPA00345"/>
<dbReference type="Proteomes" id="UP000006375">
    <property type="component" value="Chromosome"/>
</dbReference>
<dbReference type="GO" id="GO:0005737">
    <property type="term" value="C:cytoplasm"/>
    <property type="evidence" value="ECO:0007669"/>
    <property type="project" value="UniProtKB-SubCell"/>
</dbReference>
<dbReference type="GO" id="GO:0003746">
    <property type="term" value="F:translation elongation factor activity"/>
    <property type="evidence" value="ECO:0007669"/>
    <property type="project" value="UniProtKB-UniRule"/>
</dbReference>
<dbReference type="GO" id="GO:0043043">
    <property type="term" value="P:peptide biosynthetic process"/>
    <property type="evidence" value="ECO:0007669"/>
    <property type="project" value="InterPro"/>
</dbReference>
<dbReference type="CDD" id="cd04470">
    <property type="entry name" value="S1_EF-P_repeat_1"/>
    <property type="match status" value="1"/>
</dbReference>
<dbReference type="CDD" id="cd05794">
    <property type="entry name" value="S1_EF-P_repeat_2"/>
    <property type="match status" value="1"/>
</dbReference>
<dbReference type="FunFam" id="2.30.30.30:FF:000003">
    <property type="entry name" value="Elongation factor P"/>
    <property type="match status" value="1"/>
</dbReference>
<dbReference type="FunFam" id="2.40.50.140:FF:000004">
    <property type="entry name" value="Elongation factor P"/>
    <property type="match status" value="1"/>
</dbReference>
<dbReference type="FunFam" id="2.40.50.140:FF:000009">
    <property type="entry name" value="Elongation factor P"/>
    <property type="match status" value="1"/>
</dbReference>
<dbReference type="Gene3D" id="2.30.30.30">
    <property type="match status" value="1"/>
</dbReference>
<dbReference type="Gene3D" id="2.40.50.140">
    <property type="entry name" value="Nucleic acid-binding proteins"/>
    <property type="match status" value="2"/>
</dbReference>
<dbReference type="HAMAP" id="MF_00141">
    <property type="entry name" value="EF_P"/>
    <property type="match status" value="1"/>
</dbReference>
<dbReference type="InterPro" id="IPR015365">
    <property type="entry name" value="Elong-fact-P_C"/>
</dbReference>
<dbReference type="InterPro" id="IPR012340">
    <property type="entry name" value="NA-bd_OB-fold"/>
</dbReference>
<dbReference type="InterPro" id="IPR014722">
    <property type="entry name" value="Rib_uL2_dom2"/>
</dbReference>
<dbReference type="InterPro" id="IPR020599">
    <property type="entry name" value="Transl_elong_fac_P/YeiP"/>
</dbReference>
<dbReference type="InterPro" id="IPR013185">
    <property type="entry name" value="Transl_elong_KOW-like"/>
</dbReference>
<dbReference type="InterPro" id="IPR001059">
    <property type="entry name" value="Transl_elong_P/YeiP_cen"/>
</dbReference>
<dbReference type="InterPro" id="IPR013852">
    <property type="entry name" value="Transl_elong_P/YeiP_CS"/>
</dbReference>
<dbReference type="InterPro" id="IPR011768">
    <property type="entry name" value="Transl_elongation_fac_P"/>
</dbReference>
<dbReference type="InterPro" id="IPR008991">
    <property type="entry name" value="Translation_prot_SH3-like_sf"/>
</dbReference>
<dbReference type="NCBIfam" id="TIGR00038">
    <property type="entry name" value="efp"/>
    <property type="match status" value="1"/>
</dbReference>
<dbReference type="NCBIfam" id="NF001810">
    <property type="entry name" value="PRK00529.1"/>
    <property type="match status" value="1"/>
</dbReference>
<dbReference type="PANTHER" id="PTHR30053">
    <property type="entry name" value="ELONGATION FACTOR P"/>
    <property type="match status" value="1"/>
</dbReference>
<dbReference type="PANTHER" id="PTHR30053:SF14">
    <property type="entry name" value="TRANSLATION ELONGATION FACTOR KOW-LIKE DOMAIN-CONTAINING PROTEIN"/>
    <property type="match status" value="1"/>
</dbReference>
<dbReference type="Pfam" id="PF01132">
    <property type="entry name" value="EFP"/>
    <property type="match status" value="1"/>
</dbReference>
<dbReference type="Pfam" id="PF08207">
    <property type="entry name" value="EFP_N"/>
    <property type="match status" value="1"/>
</dbReference>
<dbReference type="Pfam" id="PF09285">
    <property type="entry name" value="Elong-fact-P_C"/>
    <property type="match status" value="1"/>
</dbReference>
<dbReference type="PIRSF" id="PIRSF005901">
    <property type="entry name" value="EF-P"/>
    <property type="match status" value="1"/>
</dbReference>
<dbReference type="SMART" id="SM01185">
    <property type="entry name" value="EFP"/>
    <property type="match status" value="1"/>
</dbReference>
<dbReference type="SMART" id="SM00841">
    <property type="entry name" value="Elong-fact-P_C"/>
    <property type="match status" value="1"/>
</dbReference>
<dbReference type="SUPFAM" id="SSF50249">
    <property type="entry name" value="Nucleic acid-binding proteins"/>
    <property type="match status" value="2"/>
</dbReference>
<dbReference type="SUPFAM" id="SSF50104">
    <property type="entry name" value="Translation proteins SH3-like domain"/>
    <property type="match status" value="1"/>
</dbReference>
<dbReference type="PROSITE" id="PS01275">
    <property type="entry name" value="EFP"/>
    <property type="match status" value="1"/>
</dbReference>
<proteinExistence type="inferred from homology"/>
<evidence type="ECO:0000255" key="1">
    <source>
        <dbReference type="HAMAP-Rule" id="MF_00141"/>
    </source>
</evidence>
<organism>
    <name type="scientific">Gluconobacter oxydans (strain 621H)</name>
    <name type="common">Gluconobacter suboxydans</name>
    <dbReference type="NCBI Taxonomy" id="290633"/>
    <lineage>
        <taxon>Bacteria</taxon>
        <taxon>Pseudomonadati</taxon>
        <taxon>Pseudomonadota</taxon>
        <taxon>Alphaproteobacteria</taxon>
        <taxon>Acetobacterales</taxon>
        <taxon>Acetobacteraceae</taxon>
        <taxon>Gluconobacter</taxon>
    </lineage>
</organism>
<name>EFP_GLUOX</name>
<accession>Q5FUC7</accession>
<sequence>MKQQANLIRAGQVIEHDGRRWTVLKQQIITPGKGGAFIQVEMRDLKTGNKTNERWRTADSVERLVTEDKDYTYSYMDGDNVVLMDPETFEQLILAKDIFGDQFAFLQDNMPLNVKLVEGDPVGVELPPHVTLEVTEADPVVKGQTASSSYKPAMLSNGVKTLVPPFIEAGERIVVRTEDGSYVERAKD</sequence>
<reference key="1">
    <citation type="journal article" date="2005" name="Nat. Biotechnol.">
        <title>Complete genome sequence of the acetic acid bacterium Gluconobacter oxydans.</title>
        <authorList>
            <person name="Prust C."/>
            <person name="Hoffmeister M."/>
            <person name="Liesegang H."/>
            <person name="Wiezer A."/>
            <person name="Fricke W.F."/>
            <person name="Ehrenreich A."/>
            <person name="Gottschalk G."/>
            <person name="Deppenmeier U."/>
        </authorList>
    </citation>
    <scope>NUCLEOTIDE SEQUENCE [LARGE SCALE GENOMIC DNA]</scope>
    <source>
        <strain>621H</strain>
    </source>
</reference>
<feature type="chain" id="PRO_0000094256" description="Elongation factor P">
    <location>
        <begin position="1"/>
        <end position="188"/>
    </location>
</feature>
<comment type="function">
    <text evidence="1">Involved in peptide bond synthesis. Stimulates efficient translation and peptide-bond synthesis on native or reconstituted 70S ribosomes in vitro. Probably functions indirectly by altering the affinity of the ribosome for aminoacyl-tRNA, thus increasing their reactivity as acceptors for peptidyl transferase.</text>
</comment>
<comment type="pathway">
    <text evidence="1">Protein biosynthesis; polypeptide chain elongation.</text>
</comment>
<comment type="subcellular location">
    <subcellularLocation>
        <location evidence="1">Cytoplasm</location>
    </subcellularLocation>
</comment>
<comment type="similarity">
    <text evidence="1">Belongs to the elongation factor P family.</text>
</comment>
<gene>
    <name evidence="1" type="primary">efp</name>
    <name type="ordered locus">GOX0236</name>
</gene>
<protein>
    <recommendedName>
        <fullName evidence="1">Elongation factor P</fullName>
        <shortName evidence="1">EF-P</shortName>
    </recommendedName>
</protein>